<comment type="function">
    <text evidence="1">Core subunit of the mitochondrial membrane respiratory chain NADH dehydrogenase (Complex I) that is believed to belong to the minimal assembly required for catalysis. Complex I functions in the transfer of electrons from NADH to the respiratory chain. The immediate electron acceptor for the enzyme is believed to be ubiquinone (By similarity).</text>
</comment>
<comment type="catalytic activity">
    <reaction>
        <text>a ubiquinone + NADH + 5 H(+)(in) = a ubiquinol + NAD(+) + 4 H(+)(out)</text>
        <dbReference type="Rhea" id="RHEA:29091"/>
        <dbReference type="Rhea" id="RHEA-COMP:9565"/>
        <dbReference type="Rhea" id="RHEA-COMP:9566"/>
        <dbReference type="ChEBI" id="CHEBI:15378"/>
        <dbReference type="ChEBI" id="CHEBI:16389"/>
        <dbReference type="ChEBI" id="CHEBI:17976"/>
        <dbReference type="ChEBI" id="CHEBI:57540"/>
        <dbReference type="ChEBI" id="CHEBI:57945"/>
        <dbReference type="EC" id="7.1.1.2"/>
    </reaction>
</comment>
<comment type="subcellular location">
    <subcellularLocation>
        <location evidence="1">Mitochondrion inner membrane</location>
        <topology evidence="1">Multi-pass membrane protein</topology>
    </subcellularLocation>
</comment>
<comment type="similarity">
    <text evidence="3">Belongs to the complex I subunit 5 family.</text>
</comment>
<organism>
    <name type="scientific">Cyprinus carpio</name>
    <name type="common">Common carp</name>
    <dbReference type="NCBI Taxonomy" id="7962"/>
    <lineage>
        <taxon>Eukaryota</taxon>
        <taxon>Metazoa</taxon>
        <taxon>Chordata</taxon>
        <taxon>Craniata</taxon>
        <taxon>Vertebrata</taxon>
        <taxon>Euteleostomi</taxon>
        <taxon>Actinopterygii</taxon>
        <taxon>Neopterygii</taxon>
        <taxon>Teleostei</taxon>
        <taxon>Ostariophysi</taxon>
        <taxon>Cypriniformes</taxon>
        <taxon>Cyprinidae</taxon>
        <taxon>Cyprininae</taxon>
        <taxon>Cyprinus</taxon>
    </lineage>
</organism>
<sequence>MTLIMHSSLLLIFFILVYPLLTTLNPNQQDSNMAGMTKTAVSSAFFVSLLPLMIFLNLKTEGIITNWQWMNTQAFDVNISFKFDHYSLIFVPIALYVTWSILEFALWYMHSDPNIDRFFKYLLTFLVAMIILVTANNMFQLFIGWEGVGIMSFLLIGWWHGRADANTAALQAVIYNRVGDIGLIMTMAWLAMNLNSWEIQQIFALSKNFDMTIPLMGLALAATGKSAQFGLHPWLPVAMEGPTPVSALLHSSTMVVAGIFLLIRLHPRMENNQLALTTCLCLGALTSLFTATCALTQNDIKKIVAFSTSSQLGLMMVTIGLNQPQLAFLHICTHAFFKAMLFLCSGSIIHSLNDEQDIRKMGGLFNIMPATSTYFTIGSLALTGTPFLAGFFSKDAIIEALNTSYLNAWALTLTLIATSFTAVYSFRLVYFVIMGTPRFLPLSPINENNPLVINTIKRLAWGSIIAGLIITQNFPPMKTPIMTMSITLKMAALMVTIAGLLVAMELANLTSKQVKITPMISTHHFSNMLGFYPMIIHRLIPKLKLTLGQSAATQLDKTWLETVGPKGLALTQMAMAKITNDITRGMIKTYLTIFLLTLILATIPVLL</sequence>
<keyword id="KW-0249">Electron transport</keyword>
<keyword id="KW-0472">Membrane</keyword>
<keyword id="KW-0496">Mitochondrion</keyword>
<keyword id="KW-0999">Mitochondrion inner membrane</keyword>
<keyword id="KW-0520">NAD</keyword>
<keyword id="KW-1185">Reference proteome</keyword>
<keyword id="KW-0679">Respiratory chain</keyword>
<keyword id="KW-1278">Translocase</keyword>
<keyword id="KW-0812">Transmembrane</keyword>
<keyword id="KW-1133">Transmembrane helix</keyword>
<keyword id="KW-0813">Transport</keyword>
<keyword id="KW-0830">Ubiquinone</keyword>
<protein>
    <recommendedName>
        <fullName>NADH-ubiquinone oxidoreductase chain 5</fullName>
        <ecNumber>7.1.1.2</ecNumber>
    </recommendedName>
    <alternativeName>
        <fullName>NADH dehydrogenase subunit 5</fullName>
    </alternativeName>
</protein>
<accession>P24979</accession>
<feature type="chain" id="PRO_0000118085" description="NADH-ubiquinone oxidoreductase chain 5">
    <location>
        <begin position="1"/>
        <end position="607"/>
    </location>
</feature>
<feature type="transmembrane region" description="Helical" evidence="2">
    <location>
        <begin position="1"/>
        <end position="21"/>
    </location>
</feature>
<feature type="transmembrane region" description="Helical" evidence="2">
    <location>
        <begin position="44"/>
        <end position="64"/>
    </location>
</feature>
<feature type="transmembrane region" description="Helical" evidence="2">
    <location>
        <begin position="88"/>
        <end position="108"/>
    </location>
</feature>
<feature type="transmembrane region" description="Helical" evidence="2">
    <location>
        <begin position="118"/>
        <end position="138"/>
    </location>
</feature>
<feature type="transmembrane region" description="Helical" evidence="2">
    <location>
        <begin position="139"/>
        <end position="159"/>
    </location>
</feature>
<feature type="transmembrane region" description="Helical" evidence="2">
    <location>
        <begin position="172"/>
        <end position="192"/>
    </location>
</feature>
<feature type="transmembrane region" description="Helical" evidence="2">
    <location>
        <begin position="213"/>
        <end position="235"/>
    </location>
</feature>
<feature type="transmembrane region" description="Helical" evidence="2">
    <location>
        <begin position="243"/>
        <end position="263"/>
    </location>
</feature>
<feature type="transmembrane region" description="Helical" evidence="2">
    <location>
        <begin position="274"/>
        <end position="294"/>
    </location>
</feature>
<feature type="transmembrane region" description="Helical" evidence="2">
    <location>
        <begin position="303"/>
        <end position="323"/>
    </location>
</feature>
<feature type="transmembrane region" description="Helical" evidence="2">
    <location>
        <begin position="326"/>
        <end position="346"/>
    </location>
</feature>
<feature type="transmembrane region" description="Helical" evidence="2">
    <location>
        <begin position="372"/>
        <end position="392"/>
    </location>
</feature>
<feature type="transmembrane region" description="Helical" evidence="2">
    <location>
        <begin position="415"/>
        <end position="435"/>
    </location>
</feature>
<feature type="transmembrane region" description="Helical" evidence="2">
    <location>
        <begin position="450"/>
        <end position="470"/>
    </location>
</feature>
<feature type="transmembrane region" description="Helical" evidence="2">
    <location>
        <begin position="484"/>
        <end position="504"/>
    </location>
</feature>
<feature type="transmembrane region" description="Helical" evidence="2">
    <location>
        <begin position="587"/>
        <end position="607"/>
    </location>
</feature>
<proteinExistence type="inferred from homology"/>
<geneLocation type="mitochondrion"/>
<dbReference type="EC" id="7.1.1.2"/>
<dbReference type="EMBL" id="X61010">
    <property type="protein sequence ID" value="CAA43337.1"/>
    <property type="molecule type" value="Genomic_DNA"/>
</dbReference>
<dbReference type="PIR" id="S36006">
    <property type="entry name" value="S36006"/>
</dbReference>
<dbReference type="RefSeq" id="NP_007092.1">
    <property type="nucleotide sequence ID" value="NC_001606.1"/>
</dbReference>
<dbReference type="SMR" id="P24979"/>
<dbReference type="GeneID" id="807769"/>
<dbReference type="KEGG" id="ccar:807769"/>
<dbReference type="CTD" id="4540"/>
<dbReference type="OMA" id="GVGIMSF"/>
<dbReference type="OrthoDB" id="10069788at2759"/>
<dbReference type="Proteomes" id="UP000694384">
    <property type="component" value="Unplaced"/>
</dbReference>
<dbReference type="Proteomes" id="UP000694427">
    <property type="component" value="Unplaced"/>
</dbReference>
<dbReference type="Proteomes" id="UP000694700">
    <property type="component" value="Unplaced"/>
</dbReference>
<dbReference type="Proteomes" id="UP000694701">
    <property type="component" value="Unplaced"/>
</dbReference>
<dbReference type="Proteomes" id="UP001155660">
    <property type="component" value="Mitochondrion MT"/>
</dbReference>
<dbReference type="GO" id="GO:0005743">
    <property type="term" value="C:mitochondrial inner membrane"/>
    <property type="evidence" value="ECO:0007669"/>
    <property type="project" value="UniProtKB-SubCell"/>
</dbReference>
<dbReference type="GO" id="GO:0008137">
    <property type="term" value="F:NADH dehydrogenase (ubiquinone) activity"/>
    <property type="evidence" value="ECO:0007669"/>
    <property type="project" value="UniProtKB-EC"/>
</dbReference>
<dbReference type="GO" id="GO:0042773">
    <property type="term" value="P:ATP synthesis coupled electron transport"/>
    <property type="evidence" value="ECO:0007669"/>
    <property type="project" value="InterPro"/>
</dbReference>
<dbReference type="GO" id="GO:0015990">
    <property type="term" value="P:electron transport coupled proton transport"/>
    <property type="evidence" value="ECO:0007669"/>
    <property type="project" value="TreeGrafter"/>
</dbReference>
<dbReference type="InterPro" id="IPR010934">
    <property type="entry name" value="NADH_DH_su5_C"/>
</dbReference>
<dbReference type="InterPro" id="IPR018393">
    <property type="entry name" value="NADHpl_OxRdtase_5_subgr"/>
</dbReference>
<dbReference type="InterPro" id="IPR001750">
    <property type="entry name" value="ND/Mrp_TM"/>
</dbReference>
<dbReference type="InterPro" id="IPR003945">
    <property type="entry name" value="NU5C-like"/>
</dbReference>
<dbReference type="InterPro" id="IPR001516">
    <property type="entry name" value="Proton_antipo_N"/>
</dbReference>
<dbReference type="NCBIfam" id="TIGR01974">
    <property type="entry name" value="NDH_I_L"/>
    <property type="match status" value="1"/>
</dbReference>
<dbReference type="PANTHER" id="PTHR42829">
    <property type="entry name" value="NADH-UBIQUINONE OXIDOREDUCTASE CHAIN 5"/>
    <property type="match status" value="1"/>
</dbReference>
<dbReference type="PANTHER" id="PTHR42829:SF2">
    <property type="entry name" value="NADH-UBIQUINONE OXIDOREDUCTASE CHAIN 5"/>
    <property type="match status" value="1"/>
</dbReference>
<dbReference type="Pfam" id="PF06455">
    <property type="entry name" value="NADH5_C"/>
    <property type="match status" value="1"/>
</dbReference>
<dbReference type="Pfam" id="PF00361">
    <property type="entry name" value="Proton_antipo_M"/>
    <property type="match status" value="1"/>
</dbReference>
<dbReference type="Pfam" id="PF00662">
    <property type="entry name" value="Proton_antipo_N"/>
    <property type="match status" value="1"/>
</dbReference>
<dbReference type="PRINTS" id="PR01434">
    <property type="entry name" value="NADHDHGNASE5"/>
</dbReference>
<gene>
    <name type="primary">MT-ND5</name>
    <name type="synonym">MTND5</name>
    <name type="synonym">NADH5</name>
    <name type="synonym">ND5</name>
</gene>
<name>NU5M_CYPCA</name>
<reference key="1">
    <citation type="journal article" date="1994" name="J. Mol. Evol.">
        <title>The complete nucleotide sequence and gene organization of carp (Cyprinus carpio) mitochondrial genome.</title>
        <authorList>
            <person name="Chang Y.S."/>
            <person name="Huang F.L."/>
            <person name="Lo T.B."/>
        </authorList>
    </citation>
    <scope>NUCLEOTIDE SEQUENCE [GENOMIC DNA]</scope>
</reference>
<evidence type="ECO:0000250" key="1"/>
<evidence type="ECO:0000255" key="2"/>
<evidence type="ECO:0000305" key="3"/>